<evidence type="ECO:0000250" key="1">
    <source>
        <dbReference type="UniProtKB" id="P23301"/>
    </source>
</evidence>
<evidence type="ECO:0000250" key="2">
    <source>
        <dbReference type="UniProtKB" id="P63241"/>
    </source>
</evidence>
<evidence type="ECO:0000250" key="3">
    <source>
        <dbReference type="UniProtKB" id="Q6NX89"/>
    </source>
</evidence>
<evidence type="ECO:0000250" key="4">
    <source>
        <dbReference type="UniProtKB" id="Q9GZV4"/>
    </source>
</evidence>
<evidence type="ECO:0000305" key="5"/>
<protein>
    <recommendedName>
        <fullName>Eukaryotic translation initiation factor 5A-2</fullName>
        <shortName>eIF-5A-2</shortName>
        <shortName>eIF-5A2</shortName>
    </recommendedName>
    <alternativeName>
        <fullName>Eukaryotic initiation factor 5A isoform 2</fullName>
    </alternativeName>
</protein>
<name>IF5A2_MOUSE</name>
<sequence>MADEIDFTTGDAGASSTYPMQCSALRKNGFVVLKGRPCKIVEMSTSKTGKHGHAKVHLVGIDIFTGKKYEDICPSTHNMDVPNIKRNDYQLICIQDGYLSLLTETGEVREDLKLPEGELGKEIEGKYNAGEDVQVSVMCAMSEEYAVAIKPCK</sequence>
<comment type="function">
    <text evidence="1 2 4">Translation factor that promotes translation elongation and termination, particularly upon ribosome stalling at specific amino acid sequence contexts (By similarity). Binds between the exit (E) and peptidyl (P) site of the ribosome and promotes rescue of stalled ribosome: specifically required for efficient translation of polyproline-containing peptides as well as other motifs that stall the ribosome. Acts as a ribosome quality control (RQC) cofactor by joining the RQC complex to facilitate peptidyl transfer during CAT tailing step (By similarity). Also involved in actin dynamics and cell cycle progression, mRNA decay and probably in a pathway involved in stress response and maintenance of cell wall integrity (By similarity).</text>
</comment>
<comment type="subunit">
    <text evidence="2 3">Binds to 80S ribosomes. Actively translating ribosomes show mutually exclusive binding of eIF5a (EIF5A or EIF5A2) and EEF2/eEF2 (By similarity). Interacts with DAPL1; interaction takes place at the polypeptide exit tunnel of hibernating ribosomes and prevents translation (By similarity).</text>
</comment>
<comment type="subcellular location">
    <subcellularLocation>
        <location evidence="2">Cytoplasm</location>
    </subcellularLocation>
    <subcellularLocation>
        <location evidence="2">Nucleus</location>
    </subcellularLocation>
    <subcellularLocation>
        <location evidence="2">Endoplasmic reticulum membrane</location>
        <topology evidence="2">Peripheral membrane protein</topology>
        <orientation evidence="2">Cytoplasmic side</orientation>
    </subcellularLocation>
    <text evidence="2">Hypusine modification promotes the nuclear export and cytoplasmic localization and there was a dynamic shift in the localization from predominantly cytoplasmic to primarily nuclear under apoptotic inducing conditions.</text>
</comment>
<comment type="PTM">
    <text evidence="4">Lys-50 undergoes hypusination, a unique post-translational modification that consists in the addition of a butylamino group from spermidine to lysine side chain and leads to the formation of a hypusine residue. eIF-5As are the only known proteins to undergo this modification, which is essential for their function.</text>
</comment>
<comment type="similarity">
    <text evidence="5">Belongs to the eIF-5A family.</text>
</comment>
<reference key="1">
    <citation type="journal article" date="2001" name="Genomics">
        <title>Human eIF5A2 on chromosome 3q25-q27 is a phylogenetically conserved vertebrate variant of eukaryotic translation initiation factor 5A with tissue-specific expression.</title>
        <authorList>
            <person name="Jenkins Z.A."/>
            <person name="Haag P.G."/>
            <person name="Johansson H.E."/>
        </authorList>
    </citation>
    <scope>NUCLEOTIDE SEQUENCE [MRNA]</scope>
    <source>
        <strain>BALB/cJ</strain>
    </source>
</reference>
<reference key="2">
    <citation type="journal article" date="2005" name="Science">
        <title>The transcriptional landscape of the mammalian genome.</title>
        <authorList>
            <person name="Carninci P."/>
            <person name="Kasukawa T."/>
            <person name="Katayama S."/>
            <person name="Gough J."/>
            <person name="Frith M.C."/>
            <person name="Maeda N."/>
            <person name="Oyama R."/>
            <person name="Ravasi T."/>
            <person name="Lenhard B."/>
            <person name="Wells C."/>
            <person name="Kodzius R."/>
            <person name="Shimokawa K."/>
            <person name="Bajic V.B."/>
            <person name="Brenner S.E."/>
            <person name="Batalov S."/>
            <person name="Forrest A.R."/>
            <person name="Zavolan M."/>
            <person name="Davis M.J."/>
            <person name="Wilming L.G."/>
            <person name="Aidinis V."/>
            <person name="Allen J.E."/>
            <person name="Ambesi-Impiombato A."/>
            <person name="Apweiler R."/>
            <person name="Aturaliya R.N."/>
            <person name="Bailey T.L."/>
            <person name="Bansal M."/>
            <person name="Baxter L."/>
            <person name="Beisel K.W."/>
            <person name="Bersano T."/>
            <person name="Bono H."/>
            <person name="Chalk A.M."/>
            <person name="Chiu K.P."/>
            <person name="Choudhary V."/>
            <person name="Christoffels A."/>
            <person name="Clutterbuck D.R."/>
            <person name="Crowe M.L."/>
            <person name="Dalla E."/>
            <person name="Dalrymple B.P."/>
            <person name="de Bono B."/>
            <person name="Della Gatta G."/>
            <person name="di Bernardo D."/>
            <person name="Down T."/>
            <person name="Engstrom P."/>
            <person name="Fagiolini M."/>
            <person name="Faulkner G."/>
            <person name="Fletcher C.F."/>
            <person name="Fukushima T."/>
            <person name="Furuno M."/>
            <person name="Futaki S."/>
            <person name="Gariboldi M."/>
            <person name="Georgii-Hemming P."/>
            <person name="Gingeras T.R."/>
            <person name="Gojobori T."/>
            <person name="Green R.E."/>
            <person name="Gustincich S."/>
            <person name="Harbers M."/>
            <person name="Hayashi Y."/>
            <person name="Hensch T.K."/>
            <person name="Hirokawa N."/>
            <person name="Hill D."/>
            <person name="Huminiecki L."/>
            <person name="Iacono M."/>
            <person name="Ikeo K."/>
            <person name="Iwama A."/>
            <person name="Ishikawa T."/>
            <person name="Jakt M."/>
            <person name="Kanapin A."/>
            <person name="Katoh M."/>
            <person name="Kawasawa Y."/>
            <person name="Kelso J."/>
            <person name="Kitamura H."/>
            <person name="Kitano H."/>
            <person name="Kollias G."/>
            <person name="Krishnan S.P."/>
            <person name="Kruger A."/>
            <person name="Kummerfeld S.K."/>
            <person name="Kurochkin I.V."/>
            <person name="Lareau L.F."/>
            <person name="Lazarevic D."/>
            <person name="Lipovich L."/>
            <person name="Liu J."/>
            <person name="Liuni S."/>
            <person name="McWilliam S."/>
            <person name="Madan Babu M."/>
            <person name="Madera M."/>
            <person name="Marchionni L."/>
            <person name="Matsuda H."/>
            <person name="Matsuzawa S."/>
            <person name="Miki H."/>
            <person name="Mignone F."/>
            <person name="Miyake S."/>
            <person name="Morris K."/>
            <person name="Mottagui-Tabar S."/>
            <person name="Mulder N."/>
            <person name="Nakano N."/>
            <person name="Nakauchi H."/>
            <person name="Ng P."/>
            <person name="Nilsson R."/>
            <person name="Nishiguchi S."/>
            <person name="Nishikawa S."/>
            <person name="Nori F."/>
            <person name="Ohara O."/>
            <person name="Okazaki Y."/>
            <person name="Orlando V."/>
            <person name="Pang K.C."/>
            <person name="Pavan W.J."/>
            <person name="Pavesi G."/>
            <person name="Pesole G."/>
            <person name="Petrovsky N."/>
            <person name="Piazza S."/>
            <person name="Reed J."/>
            <person name="Reid J.F."/>
            <person name="Ring B.Z."/>
            <person name="Ringwald M."/>
            <person name="Rost B."/>
            <person name="Ruan Y."/>
            <person name="Salzberg S.L."/>
            <person name="Sandelin A."/>
            <person name="Schneider C."/>
            <person name="Schoenbach C."/>
            <person name="Sekiguchi K."/>
            <person name="Semple C.A."/>
            <person name="Seno S."/>
            <person name="Sessa L."/>
            <person name="Sheng Y."/>
            <person name="Shibata Y."/>
            <person name="Shimada H."/>
            <person name="Shimada K."/>
            <person name="Silva D."/>
            <person name="Sinclair B."/>
            <person name="Sperling S."/>
            <person name="Stupka E."/>
            <person name="Sugiura K."/>
            <person name="Sultana R."/>
            <person name="Takenaka Y."/>
            <person name="Taki K."/>
            <person name="Tammoja K."/>
            <person name="Tan S.L."/>
            <person name="Tang S."/>
            <person name="Taylor M.S."/>
            <person name="Tegner J."/>
            <person name="Teichmann S.A."/>
            <person name="Ueda H.R."/>
            <person name="van Nimwegen E."/>
            <person name="Verardo R."/>
            <person name="Wei C.L."/>
            <person name="Yagi K."/>
            <person name="Yamanishi H."/>
            <person name="Zabarovsky E."/>
            <person name="Zhu S."/>
            <person name="Zimmer A."/>
            <person name="Hide W."/>
            <person name="Bult C."/>
            <person name="Grimmond S.M."/>
            <person name="Teasdale R.D."/>
            <person name="Liu E.T."/>
            <person name="Brusic V."/>
            <person name="Quackenbush J."/>
            <person name="Wahlestedt C."/>
            <person name="Mattick J.S."/>
            <person name="Hume D.A."/>
            <person name="Kai C."/>
            <person name="Sasaki D."/>
            <person name="Tomaru Y."/>
            <person name="Fukuda S."/>
            <person name="Kanamori-Katayama M."/>
            <person name="Suzuki M."/>
            <person name="Aoki J."/>
            <person name="Arakawa T."/>
            <person name="Iida J."/>
            <person name="Imamura K."/>
            <person name="Itoh M."/>
            <person name="Kato T."/>
            <person name="Kawaji H."/>
            <person name="Kawagashira N."/>
            <person name="Kawashima T."/>
            <person name="Kojima M."/>
            <person name="Kondo S."/>
            <person name="Konno H."/>
            <person name="Nakano K."/>
            <person name="Ninomiya N."/>
            <person name="Nishio T."/>
            <person name="Okada M."/>
            <person name="Plessy C."/>
            <person name="Shibata K."/>
            <person name="Shiraki T."/>
            <person name="Suzuki S."/>
            <person name="Tagami M."/>
            <person name="Waki K."/>
            <person name="Watahiki A."/>
            <person name="Okamura-Oho Y."/>
            <person name="Suzuki H."/>
            <person name="Kawai J."/>
            <person name="Hayashizaki Y."/>
        </authorList>
    </citation>
    <scope>NUCLEOTIDE SEQUENCE [LARGE SCALE MRNA]</scope>
    <source>
        <strain>C57BL/6J</strain>
        <tissue>Cerebellum</tissue>
        <tissue>Lung</tissue>
    </source>
</reference>
<reference key="3">
    <citation type="journal article" date="2004" name="Genome Res.">
        <title>The status, quality, and expansion of the NIH full-length cDNA project: the Mammalian Gene Collection (MGC).</title>
        <authorList>
            <consortium name="The MGC Project Team"/>
        </authorList>
    </citation>
    <scope>NUCLEOTIDE SEQUENCE [LARGE SCALE MRNA]</scope>
</reference>
<reference key="4">
    <citation type="journal article" date="2010" name="Cell">
        <title>A tissue-specific atlas of mouse protein phosphorylation and expression.</title>
        <authorList>
            <person name="Huttlin E.L."/>
            <person name="Jedrychowski M.P."/>
            <person name="Elias J.E."/>
            <person name="Goswami T."/>
            <person name="Rad R."/>
            <person name="Beausoleil S.A."/>
            <person name="Villen J."/>
            <person name="Haas W."/>
            <person name="Sowa M.E."/>
            <person name="Gygi S.P."/>
        </authorList>
    </citation>
    <scope>IDENTIFICATION BY MASS SPECTROMETRY [LARGE SCALE ANALYSIS]</scope>
    <source>
        <tissue>Brain</tissue>
    </source>
</reference>
<keyword id="KW-0007">Acetylation</keyword>
<keyword id="KW-0963">Cytoplasm</keyword>
<keyword id="KW-0251">Elongation factor</keyword>
<keyword id="KW-0256">Endoplasmic reticulum</keyword>
<keyword id="KW-0385">Hypusine</keyword>
<keyword id="KW-0472">Membrane</keyword>
<keyword id="KW-0539">Nucleus</keyword>
<keyword id="KW-0648">Protein biosynthesis</keyword>
<keyword id="KW-1185">Reference proteome</keyword>
<keyword id="KW-0694">RNA-binding</keyword>
<feature type="initiator methionine" description="Removed" evidence="4">
    <location>
        <position position="1"/>
    </location>
</feature>
<feature type="chain" id="PRO_0000229765" description="Eukaryotic translation initiation factor 5A-2">
    <location>
        <begin position="2"/>
        <end position="153"/>
    </location>
</feature>
<feature type="modified residue" description="N-acetylalanine" evidence="4">
    <location>
        <position position="2"/>
    </location>
</feature>
<feature type="modified residue" description="Hypusine" evidence="4">
    <location>
        <position position="50"/>
    </location>
</feature>
<proteinExistence type="evidence at protein level"/>
<organism>
    <name type="scientific">Mus musculus</name>
    <name type="common">Mouse</name>
    <dbReference type="NCBI Taxonomy" id="10090"/>
    <lineage>
        <taxon>Eukaryota</taxon>
        <taxon>Metazoa</taxon>
        <taxon>Chordata</taxon>
        <taxon>Craniata</taxon>
        <taxon>Vertebrata</taxon>
        <taxon>Euteleostomi</taxon>
        <taxon>Mammalia</taxon>
        <taxon>Eutheria</taxon>
        <taxon>Euarchontoglires</taxon>
        <taxon>Glires</taxon>
        <taxon>Rodentia</taxon>
        <taxon>Myomorpha</taxon>
        <taxon>Muroidea</taxon>
        <taxon>Muridae</taxon>
        <taxon>Murinae</taxon>
        <taxon>Mus</taxon>
        <taxon>Mus</taxon>
    </lineage>
</organism>
<accession>Q8BGY2</accession>
<dbReference type="EMBL" id="AY205262">
    <property type="protein sequence ID" value="AAO18680.1"/>
    <property type="molecule type" value="mRNA"/>
</dbReference>
<dbReference type="EMBL" id="AY205263">
    <property type="protein sequence ID" value="AAO18681.1"/>
    <property type="molecule type" value="mRNA"/>
</dbReference>
<dbReference type="EMBL" id="AY205264">
    <property type="protein sequence ID" value="AAO18682.1"/>
    <property type="molecule type" value="mRNA"/>
</dbReference>
<dbReference type="EMBL" id="AY205265">
    <property type="protein sequence ID" value="AAO18683.1"/>
    <property type="molecule type" value="mRNA"/>
</dbReference>
<dbReference type="EMBL" id="AK052412">
    <property type="protein sequence ID" value="BAC34978.1"/>
    <property type="molecule type" value="mRNA"/>
</dbReference>
<dbReference type="EMBL" id="AK082214">
    <property type="protein sequence ID" value="BAC38441.1"/>
    <property type="molecule type" value="mRNA"/>
</dbReference>
<dbReference type="EMBL" id="BC106843">
    <property type="protein sequence ID" value="AAI06844.1"/>
    <property type="molecule type" value="mRNA"/>
</dbReference>
<dbReference type="EMBL" id="BC106844">
    <property type="protein sequence ID" value="AAI06845.1"/>
    <property type="molecule type" value="mRNA"/>
</dbReference>
<dbReference type="CCDS" id="CCDS17277.1"/>
<dbReference type="RefSeq" id="NP_808254.1">
    <property type="nucleotide sequence ID" value="NM_177586.6"/>
</dbReference>
<dbReference type="SMR" id="Q8BGY2"/>
<dbReference type="BioGRID" id="229006">
    <property type="interactions" value="24"/>
</dbReference>
<dbReference type="FunCoup" id="Q8BGY2">
    <property type="interactions" value="2418"/>
</dbReference>
<dbReference type="STRING" id="10090.ENSMUSP00000050289"/>
<dbReference type="iPTMnet" id="Q8BGY2"/>
<dbReference type="PhosphoSitePlus" id="Q8BGY2"/>
<dbReference type="SwissPalm" id="Q8BGY2"/>
<dbReference type="jPOST" id="Q8BGY2"/>
<dbReference type="PaxDb" id="10090-ENSMUSP00000050289"/>
<dbReference type="PeptideAtlas" id="Q8BGY2"/>
<dbReference type="ProteomicsDB" id="267197"/>
<dbReference type="Pumba" id="Q8BGY2"/>
<dbReference type="Antibodypedia" id="33716">
    <property type="antibodies" value="389 antibodies from 30 providers"/>
</dbReference>
<dbReference type="DNASU" id="208691"/>
<dbReference type="Ensembl" id="ENSMUST00000060500.9">
    <property type="protein sequence ID" value="ENSMUSP00000050289.8"/>
    <property type="gene ID" value="ENSMUSG00000050192.9"/>
</dbReference>
<dbReference type="GeneID" id="208691"/>
<dbReference type="KEGG" id="mmu:208691"/>
<dbReference type="UCSC" id="uc008oud.1">
    <property type="organism name" value="mouse"/>
</dbReference>
<dbReference type="AGR" id="MGI:1933735"/>
<dbReference type="CTD" id="56648"/>
<dbReference type="MGI" id="MGI:1933735">
    <property type="gene designation" value="Eif5a2"/>
</dbReference>
<dbReference type="VEuPathDB" id="HostDB:ENSMUSG00000050192"/>
<dbReference type="eggNOG" id="KOG3271">
    <property type="taxonomic scope" value="Eukaryota"/>
</dbReference>
<dbReference type="GeneTree" id="ENSGT00390000003738"/>
<dbReference type="HOGENOM" id="CLU_102600_0_0_1"/>
<dbReference type="InParanoid" id="Q8BGY2"/>
<dbReference type="OMA" id="QIMDMET"/>
<dbReference type="OrthoDB" id="9975114at2759"/>
<dbReference type="PhylomeDB" id="Q8BGY2"/>
<dbReference type="TreeFam" id="TF101534"/>
<dbReference type="Reactome" id="R-MMU-204626">
    <property type="pathway name" value="Hypusine synthesis from eIF5A-lysine"/>
</dbReference>
<dbReference type="BioGRID-ORCS" id="208691">
    <property type="hits" value="3 hits in 79 CRISPR screens"/>
</dbReference>
<dbReference type="ChiTaRS" id="Eif5a2">
    <property type="organism name" value="mouse"/>
</dbReference>
<dbReference type="PRO" id="PR:Q8BGY2"/>
<dbReference type="Proteomes" id="UP000000589">
    <property type="component" value="Chromosome 3"/>
</dbReference>
<dbReference type="RNAct" id="Q8BGY2">
    <property type="molecule type" value="protein"/>
</dbReference>
<dbReference type="Bgee" id="ENSMUSG00000050192">
    <property type="expression patterns" value="Expressed in facial nucleus and 192 other cell types or tissues"/>
</dbReference>
<dbReference type="GO" id="GO:0005789">
    <property type="term" value="C:endoplasmic reticulum membrane"/>
    <property type="evidence" value="ECO:0007669"/>
    <property type="project" value="UniProtKB-SubCell"/>
</dbReference>
<dbReference type="GO" id="GO:0005634">
    <property type="term" value="C:nucleus"/>
    <property type="evidence" value="ECO:0007669"/>
    <property type="project" value="UniProtKB-SubCell"/>
</dbReference>
<dbReference type="GO" id="GO:0043022">
    <property type="term" value="F:ribosome binding"/>
    <property type="evidence" value="ECO:0007669"/>
    <property type="project" value="InterPro"/>
</dbReference>
<dbReference type="GO" id="GO:0003723">
    <property type="term" value="F:RNA binding"/>
    <property type="evidence" value="ECO:0007669"/>
    <property type="project" value="UniProtKB-KW"/>
</dbReference>
<dbReference type="GO" id="GO:0003746">
    <property type="term" value="F:translation elongation factor activity"/>
    <property type="evidence" value="ECO:0007669"/>
    <property type="project" value="UniProtKB-KW"/>
</dbReference>
<dbReference type="GO" id="GO:0045901">
    <property type="term" value="P:positive regulation of translational elongation"/>
    <property type="evidence" value="ECO:0007669"/>
    <property type="project" value="InterPro"/>
</dbReference>
<dbReference type="GO" id="GO:0045905">
    <property type="term" value="P:positive regulation of translational termination"/>
    <property type="evidence" value="ECO:0007669"/>
    <property type="project" value="InterPro"/>
</dbReference>
<dbReference type="CDD" id="cd04468">
    <property type="entry name" value="S1_eIF5A"/>
    <property type="match status" value="1"/>
</dbReference>
<dbReference type="FunFam" id="2.30.30.30:FF:000007">
    <property type="entry name" value="Eukaryotic translation initiation factor 5A"/>
    <property type="match status" value="1"/>
</dbReference>
<dbReference type="FunFam" id="2.40.50.140:FF:000034">
    <property type="entry name" value="Eukaryotic translation initiation factor 5A"/>
    <property type="match status" value="1"/>
</dbReference>
<dbReference type="Gene3D" id="2.30.30.30">
    <property type="match status" value="1"/>
</dbReference>
<dbReference type="Gene3D" id="2.40.50.140">
    <property type="entry name" value="Nucleic acid-binding proteins"/>
    <property type="match status" value="1"/>
</dbReference>
<dbReference type="InterPro" id="IPR001884">
    <property type="entry name" value="IF5A-like"/>
</dbReference>
<dbReference type="InterPro" id="IPR048670">
    <property type="entry name" value="IF5A-like_N"/>
</dbReference>
<dbReference type="InterPro" id="IPR012340">
    <property type="entry name" value="NA-bd_OB-fold"/>
</dbReference>
<dbReference type="InterPro" id="IPR014722">
    <property type="entry name" value="Rib_uL2_dom2"/>
</dbReference>
<dbReference type="InterPro" id="IPR019769">
    <property type="entry name" value="Trans_elong_IF5A_hypusine_site"/>
</dbReference>
<dbReference type="InterPro" id="IPR020189">
    <property type="entry name" value="Transl_elong_IF5A_C"/>
</dbReference>
<dbReference type="InterPro" id="IPR008991">
    <property type="entry name" value="Translation_prot_SH3-like_sf"/>
</dbReference>
<dbReference type="NCBIfam" id="TIGR00037">
    <property type="entry name" value="eIF_5A"/>
    <property type="match status" value="1"/>
</dbReference>
<dbReference type="PANTHER" id="PTHR11673">
    <property type="entry name" value="TRANSLATION INITIATION FACTOR 5A FAMILY MEMBER"/>
    <property type="match status" value="1"/>
</dbReference>
<dbReference type="Pfam" id="PF01287">
    <property type="entry name" value="eIF-5a"/>
    <property type="match status" value="1"/>
</dbReference>
<dbReference type="Pfam" id="PF21485">
    <property type="entry name" value="IF5A-like_N"/>
    <property type="match status" value="1"/>
</dbReference>
<dbReference type="PIRSF" id="PIRSF003025">
    <property type="entry name" value="eIF5A"/>
    <property type="match status" value="1"/>
</dbReference>
<dbReference type="SMART" id="SM01376">
    <property type="entry name" value="eIF-5a"/>
    <property type="match status" value="1"/>
</dbReference>
<dbReference type="SUPFAM" id="SSF50249">
    <property type="entry name" value="Nucleic acid-binding proteins"/>
    <property type="match status" value="1"/>
</dbReference>
<dbReference type="SUPFAM" id="SSF50104">
    <property type="entry name" value="Translation proteins SH3-like domain"/>
    <property type="match status" value="1"/>
</dbReference>
<dbReference type="PROSITE" id="PS00302">
    <property type="entry name" value="IF5A_HYPUSINE"/>
    <property type="match status" value="1"/>
</dbReference>
<gene>
    <name type="primary">Eif5a2</name>
</gene>